<keyword id="KW-0169">Cobalamin biosynthesis</keyword>
<keyword id="KW-0489">Methyltransferase</keyword>
<keyword id="KW-0949">S-adenosyl-L-methionine</keyword>
<keyword id="KW-0808">Transferase</keyword>
<organism>
    <name type="scientific">Pyrobaculum calidifontis (strain DSM 21063 / JCM 11548 / VA1)</name>
    <dbReference type="NCBI Taxonomy" id="410359"/>
    <lineage>
        <taxon>Archaea</taxon>
        <taxon>Thermoproteota</taxon>
        <taxon>Thermoprotei</taxon>
        <taxon>Thermoproteales</taxon>
        <taxon>Thermoproteaceae</taxon>
        <taxon>Pyrobaculum</taxon>
    </lineage>
</organism>
<comment type="function">
    <text evidence="1">Catalyzes the methylation of C-15 in cobalt-precorrin-6B followed by the decarboxylation of C-12 to form cobalt-precorrin-7.</text>
</comment>
<comment type="catalytic activity">
    <reaction evidence="1">
        <text>Co-precorrin-6B + S-adenosyl-L-methionine = Co-precorrin-7 + S-adenosyl-L-homocysteine + CO2</text>
        <dbReference type="Rhea" id="RHEA:36067"/>
        <dbReference type="ChEBI" id="CHEBI:16526"/>
        <dbReference type="ChEBI" id="CHEBI:57856"/>
        <dbReference type="ChEBI" id="CHEBI:59789"/>
        <dbReference type="ChEBI" id="CHEBI:70791"/>
        <dbReference type="ChEBI" id="CHEBI:72780"/>
        <dbReference type="EC" id="2.1.1.196"/>
    </reaction>
</comment>
<comment type="pathway">
    <text evidence="1">Cofactor biosynthesis; adenosylcobalamin biosynthesis; cob(II)yrinate a,c-diamide from sirohydrochlorin (anaerobic route): step 8/10.</text>
</comment>
<comment type="similarity">
    <text evidence="1">Belongs to the methyltransferase superfamily. Archaeal-type CbiT family.</text>
</comment>
<dbReference type="EC" id="2.1.1.196" evidence="1"/>
<dbReference type="EMBL" id="CP000561">
    <property type="protein sequence ID" value="ABO08942.1"/>
    <property type="molecule type" value="Genomic_DNA"/>
</dbReference>
<dbReference type="RefSeq" id="WP_011850200.1">
    <property type="nucleotide sequence ID" value="NC_009073.1"/>
</dbReference>
<dbReference type="SMR" id="A3MWC5"/>
<dbReference type="STRING" id="410359.Pcal_1523"/>
<dbReference type="GeneID" id="4908843"/>
<dbReference type="KEGG" id="pcl:Pcal_1523"/>
<dbReference type="eggNOG" id="arCOG00977">
    <property type="taxonomic scope" value="Archaea"/>
</dbReference>
<dbReference type="HOGENOM" id="CLU_094143_0_0_2"/>
<dbReference type="OrthoDB" id="6027at2157"/>
<dbReference type="UniPathway" id="UPA00148">
    <property type="reaction ID" value="UER00229"/>
</dbReference>
<dbReference type="Proteomes" id="UP000001431">
    <property type="component" value="Chromosome"/>
</dbReference>
<dbReference type="GO" id="GO:0043776">
    <property type="term" value="F:cobalt-precorrin-6B C5-methyltransferase activity"/>
    <property type="evidence" value="ECO:0007669"/>
    <property type="project" value="RHEA"/>
</dbReference>
<dbReference type="GO" id="GO:0008276">
    <property type="term" value="F:protein methyltransferase activity"/>
    <property type="evidence" value="ECO:0007669"/>
    <property type="project" value="InterPro"/>
</dbReference>
<dbReference type="GO" id="GO:0019251">
    <property type="term" value="P:anaerobic cobalamin biosynthetic process"/>
    <property type="evidence" value="ECO:0007669"/>
    <property type="project" value="UniProtKB-UniRule"/>
</dbReference>
<dbReference type="GO" id="GO:0032259">
    <property type="term" value="P:methylation"/>
    <property type="evidence" value="ECO:0007669"/>
    <property type="project" value="UniProtKB-KW"/>
</dbReference>
<dbReference type="CDD" id="cd02440">
    <property type="entry name" value="AdoMet_MTases"/>
    <property type="match status" value="1"/>
</dbReference>
<dbReference type="Gene3D" id="3.40.50.150">
    <property type="entry name" value="Vaccinia Virus protein VP39"/>
    <property type="match status" value="1"/>
</dbReference>
<dbReference type="HAMAP" id="MF_00786">
    <property type="entry name" value="CbiT"/>
    <property type="match status" value="1"/>
</dbReference>
<dbReference type="InterPro" id="IPR023475">
    <property type="entry name" value="CbiT"/>
</dbReference>
<dbReference type="InterPro" id="IPR014008">
    <property type="entry name" value="Cbl_synth_MTase_CbiT"/>
</dbReference>
<dbReference type="InterPro" id="IPR050714">
    <property type="entry name" value="Cobalamin_biosynth_MTase"/>
</dbReference>
<dbReference type="InterPro" id="IPR025714">
    <property type="entry name" value="Methyltranfer_dom"/>
</dbReference>
<dbReference type="InterPro" id="IPR029063">
    <property type="entry name" value="SAM-dependent_MTases_sf"/>
</dbReference>
<dbReference type="NCBIfam" id="TIGR02469">
    <property type="entry name" value="CbiT"/>
    <property type="match status" value="1"/>
</dbReference>
<dbReference type="NCBIfam" id="NF001556">
    <property type="entry name" value="PRK00377.1"/>
    <property type="match status" value="1"/>
</dbReference>
<dbReference type="PANTHER" id="PTHR43182">
    <property type="entry name" value="COBALT-PRECORRIN-6B C(15)-METHYLTRANSFERASE (DECARBOXYLATING)"/>
    <property type="match status" value="1"/>
</dbReference>
<dbReference type="PANTHER" id="PTHR43182:SF1">
    <property type="entry name" value="COBALT-PRECORRIN-7 C(5)-METHYLTRANSFERASE"/>
    <property type="match status" value="1"/>
</dbReference>
<dbReference type="Pfam" id="PF13847">
    <property type="entry name" value="Methyltransf_31"/>
    <property type="match status" value="1"/>
</dbReference>
<dbReference type="SUPFAM" id="SSF53335">
    <property type="entry name" value="S-adenosyl-L-methionine-dependent methyltransferases"/>
    <property type="match status" value="1"/>
</dbReference>
<gene>
    <name evidence="1" type="primary">cbiT</name>
    <name type="ordered locus">Pcal_1523</name>
</gene>
<proteinExistence type="inferred from homology"/>
<name>CBIT_PYRCJ</name>
<sequence length="195" mass="20990">MTWPYATPGIPDELFERAEGVPMTKAEVRSVALSKLRLRRGGVLVDVGCGTGSVSVEAALIMGEGSRVYAVDYDEEALMLTKRNAEKFGVADRVVLVRGKAPEVLAELPKADRYFVGGGGLELPAIIKAAVERMEKGIIVADVVTLESLKAAVEALGELGLDYEVTQIFVARGQRKGRYTVMTALNPVYIITAYA</sequence>
<reference key="1">
    <citation type="submission" date="2007-02" db="EMBL/GenBank/DDBJ databases">
        <title>Complete sequence of Pyrobaculum calidifontis JCM 11548.</title>
        <authorList>
            <consortium name="US DOE Joint Genome Institute"/>
            <person name="Copeland A."/>
            <person name="Lucas S."/>
            <person name="Lapidus A."/>
            <person name="Barry K."/>
            <person name="Glavina del Rio T."/>
            <person name="Dalin E."/>
            <person name="Tice H."/>
            <person name="Pitluck S."/>
            <person name="Chain P."/>
            <person name="Malfatti S."/>
            <person name="Shin M."/>
            <person name="Vergez L."/>
            <person name="Schmutz J."/>
            <person name="Larimer F."/>
            <person name="Land M."/>
            <person name="Hauser L."/>
            <person name="Kyrpides N."/>
            <person name="Mikhailova N."/>
            <person name="Cozen A.E."/>
            <person name="Fitz-Gibbon S.T."/>
            <person name="House C.H."/>
            <person name="Saltikov C."/>
            <person name="Lowe T.M."/>
            <person name="Richardson P."/>
        </authorList>
    </citation>
    <scope>NUCLEOTIDE SEQUENCE [LARGE SCALE GENOMIC DNA]</scope>
    <source>
        <strain>DSM 21063 / JCM 11548 / VA1</strain>
    </source>
</reference>
<feature type="chain" id="PRO_1000046846" description="Probable cobalt-precorrin-6B C(15)-methyltransferase (decarboxylating)">
    <location>
        <begin position="1"/>
        <end position="195"/>
    </location>
</feature>
<feature type="binding site" evidence="1">
    <location>
        <position position="24"/>
    </location>
    <ligand>
        <name>S-adenosyl-L-methionine</name>
        <dbReference type="ChEBI" id="CHEBI:59789"/>
    </ligand>
</feature>
<feature type="binding site" evidence="1">
    <location>
        <begin position="48"/>
        <end position="52"/>
    </location>
    <ligand>
        <name>S-adenosyl-L-methionine</name>
        <dbReference type="ChEBI" id="CHEBI:59789"/>
    </ligand>
</feature>
<feature type="binding site" evidence="1">
    <location>
        <position position="72"/>
    </location>
    <ligand>
        <name>S-adenosyl-L-methionine</name>
        <dbReference type="ChEBI" id="CHEBI:59789"/>
    </ligand>
</feature>
<feature type="binding site" evidence="1">
    <location>
        <position position="101"/>
    </location>
    <ligand>
        <name>S-adenosyl-L-methionine</name>
        <dbReference type="ChEBI" id="CHEBI:59789"/>
    </ligand>
</feature>
<protein>
    <recommendedName>
        <fullName evidence="1">Probable cobalt-precorrin-6B C(15)-methyltransferase (decarboxylating)</fullName>
        <ecNumber evidence="1">2.1.1.196</ecNumber>
    </recommendedName>
</protein>
<accession>A3MWC5</accession>
<evidence type="ECO:0000255" key="1">
    <source>
        <dbReference type="HAMAP-Rule" id="MF_00786"/>
    </source>
</evidence>